<feature type="chain" id="PRO_0000417089" description="CRISPR-associated endonuclease Cas1">
    <location>
        <begin position="1"/>
        <end position="319"/>
    </location>
</feature>
<feature type="binding site" evidence="1">
    <location>
        <position position="148"/>
    </location>
    <ligand>
        <name>Mn(2+)</name>
        <dbReference type="ChEBI" id="CHEBI:29035"/>
    </ligand>
</feature>
<feature type="binding site" evidence="1">
    <location>
        <position position="214"/>
    </location>
    <ligand>
        <name>Mn(2+)</name>
        <dbReference type="ChEBI" id="CHEBI:29035"/>
    </ligand>
</feature>
<feature type="binding site" evidence="1">
    <location>
        <position position="229"/>
    </location>
    <ligand>
        <name>Mn(2+)</name>
        <dbReference type="ChEBI" id="CHEBI:29035"/>
    </ligand>
</feature>
<feature type="strand" evidence="3">
    <location>
        <begin position="2"/>
        <end position="6"/>
    </location>
</feature>
<feature type="strand" evidence="3">
    <location>
        <begin position="10"/>
        <end position="14"/>
    </location>
</feature>
<feature type="strand" evidence="3">
    <location>
        <begin position="16"/>
        <end position="22"/>
    </location>
</feature>
<feature type="strand" evidence="3">
    <location>
        <begin position="27"/>
        <end position="30"/>
    </location>
</feature>
<feature type="strand" evidence="3">
    <location>
        <begin position="35"/>
        <end position="40"/>
    </location>
</feature>
<feature type="strand" evidence="3">
    <location>
        <begin position="44"/>
        <end position="47"/>
    </location>
</feature>
<feature type="helix" evidence="3">
    <location>
        <begin position="48"/>
        <end position="56"/>
    </location>
</feature>
<feature type="strand" evidence="3">
    <location>
        <begin position="61"/>
        <end position="64"/>
    </location>
</feature>
<feature type="strand" evidence="3">
    <location>
        <begin position="70"/>
        <end position="76"/>
    </location>
</feature>
<feature type="helix" evidence="3">
    <location>
        <begin position="83"/>
        <end position="94"/>
    </location>
</feature>
<feature type="helix" evidence="3">
    <location>
        <begin position="96"/>
        <end position="120"/>
    </location>
</feature>
<feature type="helix" evidence="3">
    <location>
        <begin position="129"/>
        <end position="137"/>
    </location>
</feature>
<feature type="helix" evidence="3">
    <location>
        <begin position="141"/>
        <end position="160"/>
    </location>
</feature>
<feature type="helix" evidence="3">
    <location>
        <begin position="166"/>
        <end position="168"/>
    </location>
</feature>
<feature type="helix" evidence="3">
    <location>
        <begin position="181"/>
        <end position="201"/>
    </location>
</feature>
<feature type="strand" evidence="3">
    <location>
        <begin position="212"/>
        <end position="214"/>
    </location>
</feature>
<feature type="helix" evidence="3">
    <location>
        <begin position="223"/>
        <end position="231"/>
    </location>
</feature>
<feature type="turn" evidence="3">
    <location>
        <begin position="232"/>
        <end position="235"/>
    </location>
</feature>
<feature type="helix" evidence="3">
    <location>
        <begin position="236"/>
        <end position="245"/>
    </location>
</feature>
<feature type="helix" evidence="3">
    <location>
        <begin position="251"/>
        <end position="253"/>
    </location>
</feature>
<feature type="helix" evidence="3">
    <location>
        <begin position="265"/>
        <end position="279"/>
    </location>
</feature>
<feature type="turn" evidence="3">
    <location>
        <begin position="286"/>
        <end position="289"/>
    </location>
</feature>
<feature type="helix" evidence="3">
    <location>
        <begin position="294"/>
        <end position="309"/>
    </location>
</feature>
<comment type="function">
    <text evidence="1">CRISPR (clustered regularly interspaced short palindromic repeat), is an adaptive immune system that provides protection against mobile genetic elements (viruses, transposable elements and conjugative plasmids). CRISPR clusters contain sequences complementary to antecedent mobile elements and target invading nucleic acids. CRISPR clusters are transcribed and processed into CRISPR RNA (crRNA). Acts as a dsDNA endonuclease. Involved in the integration of spacer DNA into the CRISPR cassette (By similarity).</text>
</comment>
<comment type="cofactor">
    <cofactor evidence="1">
        <name>Mg(2+)</name>
        <dbReference type="ChEBI" id="CHEBI:18420"/>
    </cofactor>
    <cofactor evidence="1">
        <name>Mn(2+)</name>
        <dbReference type="ChEBI" id="CHEBI:29035"/>
    </cofactor>
</comment>
<comment type="subunit">
    <text evidence="1 2">Homodimer (Probable). Forms a heterotetramer with a Cas2 homodimer (By similarity).</text>
</comment>
<comment type="similarity">
    <text evidence="2">Belongs to the CRISPR-associated endonuclease Cas1 family.</text>
</comment>
<proteinExistence type="evidence at protein level"/>
<dbReference type="EC" id="3.1.-.-"/>
<dbReference type="EMBL" id="AE000512">
    <property type="protein sequence ID" value="AAD36860.1"/>
    <property type="molecule type" value="Genomic_DNA"/>
</dbReference>
<dbReference type="PIR" id="B72210">
    <property type="entry name" value="B72210"/>
</dbReference>
<dbReference type="RefSeq" id="NP_229594.1">
    <property type="nucleotide sequence ID" value="NC_000853.1"/>
</dbReference>
<dbReference type="PDB" id="4XTK">
    <property type="method" value="X-ray"/>
    <property type="resolution" value="2.70 A"/>
    <property type="chains" value="A/B/C/D/E/F/G/H=1-319"/>
</dbReference>
<dbReference type="PDBsum" id="4XTK"/>
<dbReference type="SMR" id="Q9X2B7"/>
<dbReference type="STRING" id="243274.TM_1797"/>
<dbReference type="PaxDb" id="243274-THEMA_05205"/>
<dbReference type="EnsemblBacteria" id="AAD36860">
    <property type="protein sequence ID" value="AAD36860"/>
    <property type="gene ID" value="TM_1797"/>
</dbReference>
<dbReference type="KEGG" id="tma:TM1797"/>
<dbReference type="KEGG" id="tmi:THEMA_05205"/>
<dbReference type="KEGG" id="tmm:Tmari_1807"/>
<dbReference type="KEGG" id="tmw:THMA_1843"/>
<dbReference type="eggNOG" id="COG1518">
    <property type="taxonomic scope" value="Bacteria"/>
</dbReference>
<dbReference type="InParanoid" id="Q9X2B7"/>
<dbReference type="OrthoDB" id="9803119at2"/>
<dbReference type="EvolutionaryTrace" id="Q9X2B7"/>
<dbReference type="Proteomes" id="UP000008183">
    <property type="component" value="Chromosome"/>
</dbReference>
<dbReference type="GO" id="GO:0003677">
    <property type="term" value="F:DNA binding"/>
    <property type="evidence" value="ECO:0007669"/>
    <property type="project" value="UniProtKB-KW"/>
</dbReference>
<dbReference type="GO" id="GO:0004520">
    <property type="term" value="F:DNA endonuclease activity"/>
    <property type="evidence" value="ECO:0007669"/>
    <property type="project" value="InterPro"/>
</dbReference>
<dbReference type="GO" id="GO:0046872">
    <property type="term" value="F:metal ion binding"/>
    <property type="evidence" value="ECO:0007669"/>
    <property type="project" value="UniProtKB-UniRule"/>
</dbReference>
<dbReference type="GO" id="GO:0051607">
    <property type="term" value="P:defense response to virus"/>
    <property type="evidence" value="ECO:0007669"/>
    <property type="project" value="UniProtKB-UniRule"/>
</dbReference>
<dbReference type="GO" id="GO:0043571">
    <property type="term" value="P:maintenance of CRISPR repeat elements"/>
    <property type="evidence" value="ECO:0007669"/>
    <property type="project" value="UniProtKB-UniRule"/>
</dbReference>
<dbReference type="CDD" id="cd09722">
    <property type="entry name" value="Cas1_I-B"/>
    <property type="match status" value="1"/>
</dbReference>
<dbReference type="Gene3D" id="1.20.120.920">
    <property type="entry name" value="CRISPR-associated endonuclease Cas1, C-terminal domain"/>
    <property type="match status" value="1"/>
</dbReference>
<dbReference type="Gene3D" id="3.100.10.20">
    <property type="entry name" value="CRISPR-associated endonuclease Cas1, N-terminal domain"/>
    <property type="match status" value="1"/>
</dbReference>
<dbReference type="HAMAP" id="MF_01470">
    <property type="entry name" value="Cas1"/>
    <property type="match status" value="1"/>
</dbReference>
<dbReference type="InterPro" id="IPR002729">
    <property type="entry name" value="CRISPR-assoc_Cas1"/>
</dbReference>
<dbReference type="InterPro" id="IPR042206">
    <property type="entry name" value="CRISPR-assoc_Cas1_C"/>
</dbReference>
<dbReference type="InterPro" id="IPR019858">
    <property type="entry name" value="CRISPR-assoc_Cas1_HMARI/TNEAP"/>
</dbReference>
<dbReference type="InterPro" id="IPR042211">
    <property type="entry name" value="CRISPR-assoc_Cas1_N"/>
</dbReference>
<dbReference type="NCBIfam" id="TIGR00287">
    <property type="entry name" value="cas1"/>
    <property type="match status" value="1"/>
</dbReference>
<dbReference type="NCBIfam" id="TIGR03641">
    <property type="entry name" value="cas1_HMARI"/>
    <property type="match status" value="1"/>
</dbReference>
<dbReference type="PANTHER" id="PTHR43219">
    <property type="entry name" value="CRISPR-ASSOCIATED ENDONUCLEASE CAS1"/>
    <property type="match status" value="1"/>
</dbReference>
<dbReference type="PANTHER" id="PTHR43219:SF1">
    <property type="entry name" value="CRISPR-ASSOCIATED ENDONUCLEASE CAS1"/>
    <property type="match status" value="1"/>
</dbReference>
<dbReference type="Pfam" id="PF01867">
    <property type="entry name" value="Cas_Cas1"/>
    <property type="match status" value="1"/>
</dbReference>
<gene>
    <name type="primary">cas1</name>
    <name type="ordered locus">TM_1797</name>
</gene>
<organism>
    <name type="scientific">Thermotoga maritima (strain ATCC 43589 / DSM 3109 / JCM 10099 / NBRC 100826 / MSB8)</name>
    <dbReference type="NCBI Taxonomy" id="243274"/>
    <lineage>
        <taxon>Bacteria</taxon>
        <taxon>Thermotogati</taxon>
        <taxon>Thermotogota</taxon>
        <taxon>Thermotogae</taxon>
        <taxon>Thermotogales</taxon>
        <taxon>Thermotogaceae</taxon>
        <taxon>Thermotoga</taxon>
    </lineage>
</organism>
<protein>
    <recommendedName>
        <fullName>CRISPR-associated endonuclease Cas1</fullName>
        <ecNumber>3.1.-.-</ecNumber>
    </recommendedName>
</protein>
<keyword id="KW-0002">3D-structure</keyword>
<keyword id="KW-0051">Antiviral defense</keyword>
<keyword id="KW-0238">DNA-binding</keyword>
<keyword id="KW-0255">Endonuclease</keyword>
<keyword id="KW-0378">Hydrolase</keyword>
<keyword id="KW-0460">Magnesium</keyword>
<keyword id="KW-0464">Manganese</keyword>
<keyword id="KW-0479">Metal-binding</keyword>
<keyword id="KW-0540">Nuclease</keyword>
<keyword id="KW-1185">Reference proteome</keyword>
<sequence length="319" mass="37705">MESVYLFSSGTLKRKANTICLETESGRKYIPVENVMDIKVFGEVDLNKRFLEFLSQKRIPIHFFNREGYYVGTFYPREYLNSGFLILKQAEHYINQEKRMLIAREIVSRSFQNMVDFLKKRKVRADSLTRYKKKAEEASNVSELMGIEGNAREEYYSMIDSLVSDERFRIEKRTRRPPKNFANTLISFGNSLLYTTVLSLIYQTHLDPRIGYLHETNFRRFSLNLDIAELFKPAVVDRLFLNLVNTRQINEKHFDEISEGLMLNDEGKSLFVKNYEQALRETVFHKKLNRYVSMRSLIKMELHKLEKHLIGEQVFGSEE</sequence>
<evidence type="ECO:0000250" key="1"/>
<evidence type="ECO:0000305" key="2"/>
<evidence type="ECO:0007829" key="3">
    <source>
        <dbReference type="PDB" id="4XTK"/>
    </source>
</evidence>
<reference key="1">
    <citation type="journal article" date="1999" name="Nature">
        <title>Evidence for lateral gene transfer between Archaea and Bacteria from genome sequence of Thermotoga maritima.</title>
        <authorList>
            <person name="Nelson K.E."/>
            <person name="Clayton R.A."/>
            <person name="Gill S.R."/>
            <person name="Gwinn M.L."/>
            <person name="Dodson R.J."/>
            <person name="Haft D.H."/>
            <person name="Hickey E.K."/>
            <person name="Peterson J.D."/>
            <person name="Nelson W.C."/>
            <person name="Ketchum K.A."/>
            <person name="McDonald L.A."/>
            <person name="Utterback T.R."/>
            <person name="Malek J.A."/>
            <person name="Linher K.D."/>
            <person name="Garrett M.M."/>
            <person name="Stewart A.M."/>
            <person name="Cotton M.D."/>
            <person name="Pratt M.S."/>
            <person name="Phillips C.A."/>
            <person name="Richardson D.L."/>
            <person name="Heidelberg J.F."/>
            <person name="Sutton G.G."/>
            <person name="Fleischmann R.D."/>
            <person name="Eisen J.A."/>
            <person name="White O."/>
            <person name="Salzberg S.L."/>
            <person name="Smith H.O."/>
            <person name="Venter J.C."/>
            <person name="Fraser C.M."/>
        </authorList>
    </citation>
    <scope>NUCLEOTIDE SEQUENCE [LARGE SCALE GENOMIC DNA]</scope>
    <source>
        <strain>ATCC 43589 / DSM 3109 / JCM 10099 / NBRC 100826 / MSB8</strain>
    </source>
</reference>
<reference key="2">
    <citation type="submission" date="2010-01" db="PDB data bank">
        <title>Crystal structure and nuclease activity of TM1797, a Cas1 protein from Thermotoga maritima.</title>
        <authorList>
            <person name="Beloglazova N."/>
            <person name="Skarina T."/>
            <person name="Petit P."/>
            <person name="Flick R."/>
            <person name="Brown G."/>
            <person name="Savchenko A."/>
            <person name="Yakunin A.F."/>
        </authorList>
    </citation>
    <scope>X-RAY CRYSTALLOGRAPHY (2.70 ANGSTROMS)</scope>
    <scope>SUBUNIT</scope>
</reference>
<accession>Q9X2B7</accession>
<accession>G4FGI5</accession>
<name>CAS1_THEMA</name>